<sequence>MDIRKTFLDYFQSKGHKLVPSSPLVPDDPTLMFTNAGMVQFKNIFTGEAPIPNPPRATSSQTCLRAGGKHNDLDNVGYTARHHTLFEMLGNFSFADYFKEDAIAYAWEFVTDEKYLDLPVEKIWVTVHDSDDEAYDIWKKYISEDRIMRFGDKDNFWQMGDTGPCGPCSEIFYDQGAEHFHSEEDVMGGEGDRFLEIWNLVFMQYERDEKGTLNPLPKPSIDTGMGLERVVAIKEGVFNNYHSSLFMPFLEKIGELVGKPYDFDAPNSASYRVIADHLRSVSFLLAQGVNFDKEGRGYVLRRIMRRAIRHGYLLGLREPFMYKLVDTLVDLMGKQYDYLASRAEAIKTSMKMEEERFFETIEAGIKLFNEELKNTQDVFNGEVAFKLYDTFGFPLDLTEDMLREKNIRLDIDAFNKKMEAQKAQSKANWKGTGDAATTGDFKLLKEEFNTNEFVGYETQEVTTKVLALLDENFKKTDAINGKGWVLLEKTPFYAESGGQVGDKGKLEIRNEKLEIRVLDTKKFLDMNLSEVEGKLSVGDEVKAVVDPSRVEIEKHHSATHLLHAGLRAILGDHIAQAGSLNDDKRLRFDFSHPKAMTAEEIEKVEAWVNDKISRAIPRKTEIMSVDEAKKAGAMALFGEKYGNEVRVVSMGDASIELCGGTHVDNTAQIGLFMITKESGVSAGVRRIEAICGRAAVEKVKALREELSQIKEEVKNQNPIAGIAKLKEQIKTLKSEVASAMSASQKELSTVNVNGVNVIVEEVQTGDIKSMIDDVKNKYDNVAVMLFQKKGDKVLLAAGSKNTPIKAGDWIKAIAPIVGGGGGGRPDFAQAGGKDASRITTALEEAKVYLSEILEGGN</sequence>
<dbReference type="EC" id="6.1.1.7" evidence="1"/>
<dbReference type="EMBL" id="AP009179">
    <property type="protein sequence ID" value="BAF71306.1"/>
    <property type="molecule type" value="Genomic_DNA"/>
</dbReference>
<dbReference type="RefSeq" id="WP_011980039.1">
    <property type="nucleotide sequence ID" value="NC_009663.1"/>
</dbReference>
<dbReference type="SMR" id="A6Q747"/>
<dbReference type="STRING" id="387093.SUN_0346"/>
<dbReference type="KEGG" id="sun:SUN_0346"/>
<dbReference type="eggNOG" id="COG0013">
    <property type="taxonomic scope" value="Bacteria"/>
</dbReference>
<dbReference type="HOGENOM" id="CLU_004485_1_1_7"/>
<dbReference type="OrthoDB" id="9803884at2"/>
<dbReference type="Proteomes" id="UP000006378">
    <property type="component" value="Chromosome"/>
</dbReference>
<dbReference type="GO" id="GO:0005829">
    <property type="term" value="C:cytosol"/>
    <property type="evidence" value="ECO:0007669"/>
    <property type="project" value="TreeGrafter"/>
</dbReference>
<dbReference type="GO" id="GO:0004813">
    <property type="term" value="F:alanine-tRNA ligase activity"/>
    <property type="evidence" value="ECO:0007669"/>
    <property type="project" value="UniProtKB-UniRule"/>
</dbReference>
<dbReference type="GO" id="GO:0002161">
    <property type="term" value="F:aminoacyl-tRNA deacylase activity"/>
    <property type="evidence" value="ECO:0007669"/>
    <property type="project" value="TreeGrafter"/>
</dbReference>
<dbReference type="GO" id="GO:0005524">
    <property type="term" value="F:ATP binding"/>
    <property type="evidence" value="ECO:0007669"/>
    <property type="project" value="UniProtKB-UniRule"/>
</dbReference>
<dbReference type="GO" id="GO:0000049">
    <property type="term" value="F:tRNA binding"/>
    <property type="evidence" value="ECO:0007669"/>
    <property type="project" value="UniProtKB-KW"/>
</dbReference>
<dbReference type="GO" id="GO:0008270">
    <property type="term" value="F:zinc ion binding"/>
    <property type="evidence" value="ECO:0007669"/>
    <property type="project" value="UniProtKB-UniRule"/>
</dbReference>
<dbReference type="GO" id="GO:0006419">
    <property type="term" value="P:alanyl-tRNA aminoacylation"/>
    <property type="evidence" value="ECO:0007669"/>
    <property type="project" value="UniProtKB-UniRule"/>
</dbReference>
<dbReference type="GO" id="GO:0045892">
    <property type="term" value="P:negative regulation of DNA-templated transcription"/>
    <property type="evidence" value="ECO:0007669"/>
    <property type="project" value="TreeGrafter"/>
</dbReference>
<dbReference type="CDD" id="cd00673">
    <property type="entry name" value="AlaRS_core"/>
    <property type="match status" value="1"/>
</dbReference>
<dbReference type="FunFam" id="3.10.310.40:FF:000001">
    <property type="entry name" value="Alanine--tRNA ligase"/>
    <property type="match status" value="1"/>
</dbReference>
<dbReference type="FunFam" id="3.30.54.20:FF:000001">
    <property type="entry name" value="Alanine--tRNA ligase"/>
    <property type="match status" value="1"/>
</dbReference>
<dbReference type="FunFam" id="3.30.930.10:FF:000004">
    <property type="entry name" value="Alanine--tRNA ligase"/>
    <property type="match status" value="1"/>
</dbReference>
<dbReference type="FunFam" id="3.30.980.10:FF:000004">
    <property type="entry name" value="Alanine--tRNA ligase, cytoplasmic"/>
    <property type="match status" value="1"/>
</dbReference>
<dbReference type="Gene3D" id="2.40.30.130">
    <property type="match status" value="1"/>
</dbReference>
<dbReference type="Gene3D" id="3.10.310.40">
    <property type="match status" value="1"/>
</dbReference>
<dbReference type="Gene3D" id="3.30.54.20">
    <property type="match status" value="1"/>
</dbReference>
<dbReference type="Gene3D" id="3.30.930.10">
    <property type="entry name" value="Bira Bifunctional Protein, Domain 2"/>
    <property type="match status" value="1"/>
</dbReference>
<dbReference type="Gene3D" id="3.30.980.10">
    <property type="entry name" value="Threonyl-trna Synthetase, Chain A, domain 2"/>
    <property type="match status" value="1"/>
</dbReference>
<dbReference type="HAMAP" id="MF_00036_B">
    <property type="entry name" value="Ala_tRNA_synth_B"/>
    <property type="match status" value="1"/>
</dbReference>
<dbReference type="InterPro" id="IPR045864">
    <property type="entry name" value="aa-tRNA-synth_II/BPL/LPL"/>
</dbReference>
<dbReference type="InterPro" id="IPR002318">
    <property type="entry name" value="Ala-tRNA-lgiase_IIc"/>
</dbReference>
<dbReference type="InterPro" id="IPR018162">
    <property type="entry name" value="Ala-tRNA-ligase_IIc_anticod-bd"/>
</dbReference>
<dbReference type="InterPro" id="IPR018165">
    <property type="entry name" value="Ala-tRNA-synth_IIc_core"/>
</dbReference>
<dbReference type="InterPro" id="IPR018164">
    <property type="entry name" value="Ala-tRNA-synth_IIc_N"/>
</dbReference>
<dbReference type="InterPro" id="IPR050058">
    <property type="entry name" value="Ala-tRNA_ligase"/>
</dbReference>
<dbReference type="InterPro" id="IPR023033">
    <property type="entry name" value="Ala_tRNA_ligase_euk/bac"/>
</dbReference>
<dbReference type="InterPro" id="IPR003156">
    <property type="entry name" value="DHHA1_dom"/>
</dbReference>
<dbReference type="InterPro" id="IPR018163">
    <property type="entry name" value="Thr/Ala-tRNA-synth_IIc_edit"/>
</dbReference>
<dbReference type="InterPro" id="IPR009000">
    <property type="entry name" value="Transl_B-barrel_sf"/>
</dbReference>
<dbReference type="InterPro" id="IPR012947">
    <property type="entry name" value="tRNA_SAD"/>
</dbReference>
<dbReference type="NCBIfam" id="TIGR00344">
    <property type="entry name" value="alaS"/>
    <property type="match status" value="1"/>
</dbReference>
<dbReference type="PANTHER" id="PTHR11777:SF9">
    <property type="entry name" value="ALANINE--TRNA LIGASE, CYTOPLASMIC"/>
    <property type="match status" value="1"/>
</dbReference>
<dbReference type="PANTHER" id="PTHR11777">
    <property type="entry name" value="ALANYL-TRNA SYNTHETASE"/>
    <property type="match status" value="1"/>
</dbReference>
<dbReference type="Pfam" id="PF02272">
    <property type="entry name" value="DHHA1"/>
    <property type="match status" value="1"/>
</dbReference>
<dbReference type="Pfam" id="PF01411">
    <property type="entry name" value="tRNA-synt_2c"/>
    <property type="match status" value="1"/>
</dbReference>
<dbReference type="Pfam" id="PF07973">
    <property type="entry name" value="tRNA_SAD"/>
    <property type="match status" value="1"/>
</dbReference>
<dbReference type="PRINTS" id="PR00980">
    <property type="entry name" value="TRNASYNTHALA"/>
</dbReference>
<dbReference type="SMART" id="SM00863">
    <property type="entry name" value="tRNA_SAD"/>
    <property type="match status" value="1"/>
</dbReference>
<dbReference type="SUPFAM" id="SSF55681">
    <property type="entry name" value="Class II aaRS and biotin synthetases"/>
    <property type="match status" value="1"/>
</dbReference>
<dbReference type="SUPFAM" id="SSF101353">
    <property type="entry name" value="Putative anticodon-binding domain of alanyl-tRNA synthetase (AlaRS)"/>
    <property type="match status" value="1"/>
</dbReference>
<dbReference type="SUPFAM" id="SSF55186">
    <property type="entry name" value="ThrRS/AlaRS common domain"/>
    <property type="match status" value="1"/>
</dbReference>
<dbReference type="SUPFAM" id="SSF50447">
    <property type="entry name" value="Translation proteins"/>
    <property type="match status" value="1"/>
</dbReference>
<dbReference type="PROSITE" id="PS50860">
    <property type="entry name" value="AA_TRNA_LIGASE_II_ALA"/>
    <property type="match status" value="1"/>
</dbReference>
<organism>
    <name type="scientific">Sulfurovum sp. (strain NBC37-1)</name>
    <dbReference type="NCBI Taxonomy" id="387093"/>
    <lineage>
        <taxon>Bacteria</taxon>
        <taxon>Pseudomonadati</taxon>
        <taxon>Campylobacterota</taxon>
        <taxon>Epsilonproteobacteria</taxon>
        <taxon>Campylobacterales</taxon>
        <taxon>Sulfurovaceae</taxon>
        <taxon>Sulfurovum</taxon>
    </lineage>
</organism>
<feature type="chain" id="PRO_0000347834" description="Alanine--tRNA ligase">
    <location>
        <begin position="1"/>
        <end position="857"/>
    </location>
</feature>
<feature type="binding site" evidence="1">
    <location>
        <position position="556"/>
    </location>
    <ligand>
        <name>Zn(2+)</name>
        <dbReference type="ChEBI" id="CHEBI:29105"/>
    </ligand>
</feature>
<feature type="binding site" evidence="1">
    <location>
        <position position="560"/>
    </location>
    <ligand>
        <name>Zn(2+)</name>
        <dbReference type="ChEBI" id="CHEBI:29105"/>
    </ligand>
</feature>
<feature type="binding site" evidence="1">
    <location>
        <position position="658"/>
    </location>
    <ligand>
        <name>Zn(2+)</name>
        <dbReference type="ChEBI" id="CHEBI:29105"/>
    </ligand>
</feature>
<feature type="binding site" evidence="1">
    <location>
        <position position="662"/>
    </location>
    <ligand>
        <name>Zn(2+)</name>
        <dbReference type="ChEBI" id="CHEBI:29105"/>
    </ligand>
</feature>
<reference key="1">
    <citation type="journal article" date="2007" name="Proc. Natl. Acad. Sci. U.S.A.">
        <title>Deep-sea vent epsilon-proteobacterial genomes provide insights into emergence of pathogens.</title>
        <authorList>
            <person name="Nakagawa S."/>
            <person name="Takaki Y."/>
            <person name="Shimamura S."/>
            <person name="Reysenbach A.-L."/>
            <person name="Takai K."/>
            <person name="Horikoshi K."/>
        </authorList>
    </citation>
    <scope>NUCLEOTIDE SEQUENCE [LARGE SCALE GENOMIC DNA]</scope>
    <source>
        <strain>NBC37-1</strain>
    </source>
</reference>
<keyword id="KW-0030">Aminoacyl-tRNA synthetase</keyword>
<keyword id="KW-0067">ATP-binding</keyword>
<keyword id="KW-0963">Cytoplasm</keyword>
<keyword id="KW-0436">Ligase</keyword>
<keyword id="KW-0479">Metal-binding</keyword>
<keyword id="KW-0547">Nucleotide-binding</keyword>
<keyword id="KW-0648">Protein biosynthesis</keyword>
<keyword id="KW-0694">RNA-binding</keyword>
<keyword id="KW-0820">tRNA-binding</keyword>
<keyword id="KW-0862">Zinc</keyword>
<evidence type="ECO:0000255" key="1">
    <source>
        <dbReference type="HAMAP-Rule" id="MF_00036"/>
    </source>
</evidence>
<gene>
    <name evidence="1" type="primary">alaS</name>
    <name type="ordered locus">SUN_0346</name>
</gene>
<proteinExistence type="inferred from homology"/>
<protein>
    <recommendedName>
        <fullName evidence="1">Alanine--tRNA ligase</fullName>
        <ecNumber evidence="1">6.1.1.7</ecNumber>
    </recommendedName>
    <alternativeName>
        <fullName evidence="1">Alanyl-tRNA synthetase</fullName>
        <shortName evidence="1">AlaRS</shortName>
    </alternativeName>
</protein>
<accession>A6Q747</accession>
<comment type="function">
    <text evidence="1">Catalyzes the attachment of alanine to tRNA(Ala) in a two-step reaction: alanine is first activated by ATP to form Ala-AMP and then transferred to the acceptor end of tRNA(Ala). Also edits incorrectly charged Ser-tRNA(Ala) and Gly-tRNA(Ala) via its editing domain.</text>
</comment>
<comment type="catalytic activity">
    <reaction evidence="1">
        <text>tRNA(Ala) + L-alanine + ATP = L-alanyl-tRNA(Ala) + AMP + diphosphate</text>
        <dbReference type="Rhea" id="RHEA:12540"/>
        <dbReference type="Rhea" id="RHEA-COMP:9657"/>
        <dbReference type="Rhea" id="RHEA-COMP:9923"/>
        <dbReference type="ChEBI" id="CHEBI:30616"/>
        <dbReference type="ChEBI" id="CHEBI:33019"/>
        <dbReference type="ChEBI" id="CHEBI:57972"/>
        <dbReference type="ChEBI" id="CHEBI:78442"/>
        <dbReference type="ChEBI" id="CHEBI:78497"/>
        <dbReference type="ChEBI" id="CHEBI:456215"/>
        <dbReference type="EC" id="6.1.1.7"/>
    </reaction>
</comment>
<comment type="cofactor">
    <cofactor evidence="1">
        <name>Zn(2+)</name>
        <dbReference type="ChEBI" id="CHEBI:29105"/>
    </cofactor>
    <text evidence="1">Binds 1 zinc ion per subunit.</text>
</comment>
<comment type="subcellular location">
    <subcellularLocation>
        <location evidence="1">Cytoplasm</location>
    </subcellularLocation>
</comment>
<comment type="domain">
    <text evidence="1">Consists of three domains; the N-terminal catalytic domain, the editing domain and the C-terminal C-Ala domain. The editing domain removes incorrectly charged amino acids, while the C-Ala domain, along with tRNA(Ala), serves as a bridge to cooperatively bring together the editing and aminoacylation centers thus stimulating deacylation of misacylated tRNAs.</text>
</comment>
<comment type="similarity">
    <text evidence="1">Belongs to the class-II aminoacyl-tRNA synthetase family.</text>
</comment>
<name>SYA_SULNB</name>